<name>RS3_DROME</name>
<keyword id="KW-0002">3D-structure</keyword>
<keyword id="KW-0963">Cytoplasm</keyword>
<keyword id="KW-0227">DNA damage</keyword>
<keyword id="KW-0234">DNA repair</keyword>
<keyword id="KW-0255">Endonuclease</keyword>
<keyword id="KW-0378">Hydrolase</keyword>
<keyword id="KW-0540">Nuclease</keyword>
<keyword id="KW-0539">Nucleus</keyword>
<keyword id="KW-0597">Phosphoprotein</keyword>
<keyword id="KW-1185">Reference proteome</keyword>
<keyword id="KW-0687">Ribonucleoprotein</keyword>
<keyword id="KW-0689">Ribosomal protein</keyword>
<keyword id="KW-0694">RNA-binding</keyword>
<gene>
    <name type="primary">RpS3</name>
    <name type="synonym">M(3)95A</name>
    <name type="ORF">CG6779</name>
</gene>
<dbReference type="EMBL" id="L13690">
    <property type="protein sequence ID" value="AAA28875.1"/>
    <property type="molecule type" value="mRNA"/>
</dbReference>
<dbReference type="EMBL" id="X72921">
    <property type="protein sequence ID" value="CAA51425.1"/>
    <property type="molecule type" value="Genomic_DNA"/>
</dbReference>
<dbReference type="EMBL" id="AE014297">
    <property type="protein sequence ID" value="AAF56129.1"/>
    <property type="molecule type" value="Genomic_DNA"/>
</dbReference>
<dbReference type="EMBL" id="AY118971">
    <property type="protein sequence ID" value="AAM50831.1"/>
    <property type="molecule type" value="mRNA"/>
</dbReference>
<dbReference type="PIR" id="S35620">
    <property type="entry name" value="S35620"/>
</dbReference>
<dbReference type="RefSeq" id="NP_001287481.1">
    <property type="nucleotide sequence ID" value="NM_001300552.1"/>
</dbReference>
<dbReference type="RefSeq" id="NP_476632.1">
    <property type="nucleotide sequence ID" value="NM_057284.6"/>
</dbReference>
<dbReference type="PDB" id="4V6W">
    <property type="method" value="EM"/>
    <property type="resolution" value="6.00 A"/>
    <property type="chains" value="AD=1-246"/>
</dbReference>
<dbReference type="PDB" id="6XU6">
    <property type="method" value="EM"/>
    <property type="resolution" value="3.50 A"/>
    <property type="chains" value="AD=3-229"/>
</dbReference>
<dbReference type="PDB" id="6XU7">
    <property type="method" value="EM"/>
    <property type="resolution" value="4.90 A"/>
    <property type="chains" value="AD=3-229"/>
</dbReference>
<dbReference type="PDB" id="6XU8">
    <property type="method" value="EM"/>
    <property type="resolution" value="3.00 A"/>
    <property type="chains" value="AD=3-229"/>
</dbReference>
<dbReference type="PDBsum" id="4V6W"/>
<dbReference type="PDBsum" id="6XU6"/>
<dbReference type="PDBsum" id="6XU7"/>
<dbReference type="PDBsum" id="6XU8"/>
<dbReference type="EMDB" id="EMD-10622"/>
<dbReference type="EMDB" id="EMD-10623"/>
<dbReference type="EMDB" id="EMD-10624"/>
<dbReference type="SMR" id="Q06559"/>
<dbReference type="BioGRID" id="67703">
    <property type="interactions" value="182"/>
</dbReference>
<dbReference type="DIP" id="DIP-17168N"/>
<dbReference type="FunCoup" id="Q06559">
    <property type="interactions" value="1606"/>
</dbReference>
<dbReference type="IntAct" id="Q06559">
    <property type="interactions" value="3"/>
</dbReference>
<dbReference type="MINT" id="Q06559"/>
<dbReference type="STRING" id="7227.FBpp0312066"/>
<dbReference type="MoonProt" id="Q06559"/>
<dbReference type="iPTMnet" id="Q06559"/>
<dbReference type="PaxDb" id="7227-FBpp0083802"/>
<dbReference type="DNASU" id="42761"/>
<dbReference type="EnsemblMetazoa" id="FBtr0084410">
    <property type="protein sequence ID" value="FBpp0083802"/>
    <property type="gene ID" value="FBgn0002622"/>
</dbReference>
<dbReference type="EnsemblMetazoa" id="FBtr0346349">
    <property type="protein sequence ID" value="FBpp0312066"/>
    <property type="gene ID" value="FBgn0002622"/>
</dbReference>
<dbReference type="GeneID" id="42761"/>
<dbReference type="KEGG" id="dme:Dmel_CG6779"/>
<dbReference type="AGR" id="FB:FBgn0002622"/>
<dbReference type="CTD" id="6188"/>
<dbReference type="FlyBase" id="FBgn0002622">
    <property type="gene designation" value="RpS3"/>
</dbReference>
<dbReference type="VEuPathDB" id="VectorBase:FBgn0002622"/>
<dbReference type="eggNOG" id="KOG3181">
    <property type="taxonomic scope" value="Eukaryota"/>
</dbReference>
<dbReference type="GeneTree" id="ENSGT00390000008610"/>
<dbReference type="HOGENOM" id="CLU_058591_2_1_1"/>
<dbReference type="InParanoid" id="Q06559"/>
<dbReference type="OMA" id="NKKKWMI"/>
<dbReference type="OrthoDB" id="10248446at2759"/>
<dbReference type="PhylomeDB" id="Q06559"/>
<dbReference type="Reactome" id="R-DME-156827">
    <property type="pathway name" value="L13a-mediated translational silencing of Ceruloplasmin expression"/>
</dbReference>
<dbReference type="Reactome" id="R-DME-1799339">
    <property type="pathway name" value="SRP-dependent cotranslational protein targeting to membrane"/>
</dbReference>
<dbReference type="Reactome" id="R-DME-72649">
    <property type="pathway name" value="Translation initiation complex formation"/>
</dbReference>
<dbReference type="Reactome" id="R-DME-72689">
    <property type="pathway name" value="Formation of a pool of free 40S subunits"/>
</dbReference>
<dbReference type="Reactome" id="R-DME-72695">
    <property type="pathway name" value="Formation of the ternary complex, and subsequently, the 43S complex"/>
</dbReference>
<dbReference type="Reactome" id="R-DME-72702">
    <property type="pathway name" value="Ribosomal scanning and start codon recognition"/>
</dbReference>
<dbReference type="Reactome" id="R-DME-72706">
    <property type="pathway name" value="GTP hydrolysis and joining of the 60S ribosomal subunit"/>
</dbReference>
<dbReference type="Reactome" id="R-DME-975956">
    <property type="pathway name" value="Nonsense Mediated Decay (NMD) independent of the Exon Junction Complex (EJC)"/>
</dbReference>
<dbReference type="Reactome" id="R-DME-975957">
    <property type="pathway name" value="Nonsense Mediated Decay (NMD) enhanced by the Exon Junction Complex (EJC)"/>
</dbReference>
<dbReference type="SignaLink" id="Q06559"/>
<dbReference type="BioGRID-ORCS" id="42761">
    <property type="hits" value="0 hits in 1 CRISPR screen"/>
</dbReference>
<dbReference type="ChiTaRS" id="RpS3">
    <property type="organism name" value="fly"/>
</dbReference>
<dbReference type="GenomeRNAi" id="42761"/>
<dbReference type="PRO" id="PR:Q06559"/>
<dbReference type="Proteomes" id="UP000000803">
    <property type="component" value="Chromosome 3R"/>
</dbReference>
<dbReference type="Bgee" id="FBgn0002622">
    <property type="expression patterns" value="Expressed in eye disc (Drosophila) and 296 other cell types or tissues"/>
</dbReference>
<dbReference type="ExpressionAtlas" id="Q06559">
    <property type="expression patterns" value="baseline and differential"/>
</dbReference>
<dbReference type="GO" id="GO:0022626">
    <property type="term" value="C:cytosolic ribosome"/>
    <property type="evidence" value="ECO:0000314"/>
    <property type="project" value="FlyBase"/>
</dbReference>
<dbReference type="GO" id="GO:0022627">
    <property type="term" value="C:cytosolic small ribosomal subunit"/>
    <property type="evidence" value="ECO:0000318"/>
    <property type="project" value="GO_Central"/>
</dbReference>
<dbReference type="GO" id="GO:0016363">
    <property type="term" value="C:nuclear matrix"/>
    <property type="evidence" value="ECO:0000314"/>
    <property type="project" value="FlyBase"/>
</dbReference>
<dbReference type="GO" id="GO:0005634">
    <property type="term" value="C:nucleus"/>
    <property type="evidence" value="ECO:0000314"/>
    <property type="project" value="FlyBase"/>
</dbReference>
<dbReference type="GO" id="GO:0140078">
    <property type="term" value="F:class I DNA-(apurinic or apyrimidinic site) endonuclease activity"/>
    <property type="evidence" value="ECO:0000314"/>
    <property type="project" value="FlyBase"/>
</dbReference>
<dbReference type="GO" id="GO:0003684">
    <property type="term" value="F:damaged DNA binding"/>
    <property type="evidence" value="ECO:0000314"/>
    <property type="project" value="UniProtKB"/>
</dbReference>
<dbReference type="GO" id="GO:0004519">
    <property type="term" value="F:endonuclease activity"/>
    <property type="evidence" value="ECO:0007669"/>
    <property type="project" value="UniProtKB-KW"/>
</dbReference>
<dbReference type="GO" id="GO:0032357">
    <property type="term" value="F:oxidized purine DNA binding"/>
    <property type="evidence" value="ECO:0000314"/>
    <property type="project" value="UniProtKB"/>
</dbReference>
<dbReference type="GO" id="GO:0008534">
    <property type="term" value="F:oxidized purine nucleobase lesion DNA N-glycosylase activity"/>
    <property type="evidence" value="ECO:0000314"/>
    <property type="project" value="FlyBase"/>
</dbReference>
<dbReference type="GO" id="GO:0003723">
    <property type="term" value="F:RNA binding"/>
    <property type="evidence" value="ECO:0007669"/>
    <property type="project" value="UniProtKB-KW"/>
</dbReference>
<dbReference type="GO" id="GO:0003735">
    <property type="term" value="F:structural constituent of ribosome"/>
    <property type="evidence" value="ECO:0000314"/>
    <property type="project" value="FlyBase"/>
</dbReference>
<dbReference type="GO" id="GO:0002181">
    <property type="term" value="P:cytoplasmic translation"/>
    <property type="evidence" value="ECO:0000304"/>
    <property type="project" value="FlyBase"/>
</dbReference>
<dbReference type="GO" id="GO:0006281">
    <property type="term" value="P:DNA repair"/>
    <property type="evidence" value="ECO:0000314"/>
    <property type="project" value="FlyBase"/>
</dbReference>
<dbReference type="GO" id="GO:0000278">
    <property type="term" value="P:mitotic cell cycle"/>
    <property type="evidence" value="ECO:0007001"/>
    <property type="project" value="FlyBase"/>
</dbReference>
<dbReference type="GO" id="GO:0043524">
    <property type="term" value="P:negative regulation of neuron apoptotic process"/>
    <property type="evidence" value="ECO:0000315"/>
    <property type="project" value="FlyBase"/>
</dbReference>
<dbReference type="GO" id="GO:2001235">
    <property type="term" value="P:positive regulation of apoptotic signaling pathway"/>
    <property type="evidence" value="ECO:0000318"/>
    <property type="project" value="GO_Central"/>
</dbReference>
<dbReference type="CDD" id="cd02413">
    <property type="entry name" value="KH-II_40S_S3"/>
    <property type="match status" value="1"/>
</dbReference>
<dbReference type="FunFam" id="3.30.1140.32:FF:000005">
    <property type="entry name" value="40S ribosomal protein S3"/>
    <property type="match status" value="1"/>
</dbReference>
<dbReference type="FunFam" id="3.30.300.20:FF:000006">
    <property type="entry name" value="40S ribosomal protein S3"/>
    <property type="match status" value="1"/>
</dbReference>
<dbReference type="Gene3D" id="3.30.300.20">
    <property type="match status" value="1"/>
</dbReference>
<dbReference type="Gene3D" id="3.30.1140.32">
    <property type="entry name" value="Ribosomal protein S3, C-terminal domain"/>
    <property type="match status" value="1"/>
</dbReference>
<dbReference type="InterPro" id="IPR015946">
    <property type="entry name" value="KH_dom-like_a/b"/>
</dbReference>
<dbReference type="InterPro" id="IPR004044">
    <property type="entry name" value="KH_dom_type_2"/>
</dbReference>
<dbReference type="InterPro" id="IPR009019">
    <property type="entry name" value="KH_sf_prok-type"/>
</dbReference>
<dbReference type="InterPro" id="IPR036419">
    <property type="entry name" value="Ribosomal_S3_C_sf"/>
</dbReference>
<dbReference type="InterPro" id="IPR001351">
    <property type="entry name" value="Ribosomal_uS3_C"/>
</dbReference>
<dbReference type="InterPro" id="IPR018280">
    <property type="entry name" value="Ribosomal_uS3_CS"/>
</dbReference>
<dbReference type="InterPro" id="IPR005703">
    <property type="entry name" value="Ribosomal_uS3_euk/arc"/>
</dbReference>
<dbReference type="NCBIfam" id="NF003219">
    <property type="entry name" value="PRK04191.1"/>
    <property type="match status" value="1"/>
</dbReference>
<dbReference type="NCBIfam" id="TIGR01008">
    <property type="entry name" value="uS3_euk_arch"/>
    <property type="match status" value="1"/>
</dbReference>
<dbReference type="PANTHER" id="PTHR11760">
    <property type="entry name" value="30S/40S RIBOSOMAL PROTEIN S3"/>
    <property type="match status" value="1"/>
</dbReference>
<dbReference type="PANTHER" id="PTHR11760:SF32">
    <property type="entry name" value="SMALL RIBOSOMAL SUBUNIT PROTEIN US3"/>
    <property type="match status" value="1"/>
</dbReference>
<dbReference type="Pfam" id="PF07650">
    <property type="entry name" value="KH_2"/>
    <property type="match status" value="1"/>
</dbReference>
<dbReference type="Pfam" id="PF00189">
    <property type="entry name" value="Ribosomal_S3_C"/>
    <property type="match status" value="1"/>
</dbReference>
<dbReference type="SUPFAM" id="SSF54814">
    <property type="entry name" value="Prokaryotic type KH domain (KH-domain type II)"/>
    <property type="match status" value="1"/>
</dbReference>
<dbReference type="SUPFAM" id="SSF54821">
    <property type="entry name" value="Ribosomal protein S3 C-terminal domain"/>
    <property type="match status" value="1"/>
</dbReference>
<dbReference type="PROSITE" id="PS50823">
    <property type="entry name" value="KH_TYPE_2"/>
    <property type="match status" value="1"/>
</dbReference>
<dbReference type="PROSITE" id="PS00548">
    <property type="entry name" value="RIBOSOMAL_S3"/>
    <property type="match status" value="1"/>
</dbReference>
<organism>
    <name type="scientific">Drosophila melanogaster</name>
    <name type="common">Fruit fly</name>
    <dbReference type="NCBI Taxonomy" id="7227"/>
    <lineage>
        <taxon>Eukaryota</taxon>
        <taxon>Metazoa</taxon>
        <taxon>Ecdysozoa</taxon>
        <taxon>Arthropoda</taxon>
        <taxon>Hexapoda</taxon>
        <taxon>Insecta</taxon>
        <taxon>Pterygota</taxon>
        <taxon>Neoptera</taxon>
        <taxon>Endopterygota</taxon>
        <taxon>Diptera</taxon>
        <taxon>Brachycera</taxon>
        <taxon>Muscomorpha</taxon>
        <taxon>Ephydroidea</taxon>
        <taxon>Drosophilidae</taxon>
        <taxon>Drosophila</taxon>
        <taxon>Sophophora</taxon>
    </lineage>
</organism>
<sequence>MNANLPISKKRKFVSDGIFKAELNEFLTRELAEDGYSGVEVRVTPSRTEIIIMATKTQQVLGEKGRRIRELTAMVQKRFNFETGRIELYAEKVAARGLCAIAQAESLRYKLTGGLAVRRACYGVLRYIMESGAKGCEVVVSGKLRGQRAKSMKFVDGLMIHSGDPCNDYVETATRHVLLRQGVLGIKVKVMLPYDPKNKIGPKKPLPDNVSVVEPKEEKIYETPETEYKIPPPSKPLDDLSEAKVL</sequence>
<comment type="function">
    <text>Has DNA repair activity directed towards the mutagenic lesions 8-oxoguanine and abasic sites in DNA. It can cleave DNA containing 8-oxoguanine residues efficiently. Also acts as an ap lyase, cleaving phosphodiester bonds via a beta,delta elimination reaction.</text>
</comment>
<comment type="subunit">
    <text evidence="4">Interacts with LTV1; the interaction is RNA-independent.</text>
</comment>
<comment type="subcellular location">
    <subcellularLocation>
        <location evidence="4">Cytoplasm</location>
    </subcellularLocation>
    <subcellularLocation>
        <location evidence="4 5">Nucleus</location>
    </subcellularLocation>
</comment>
<comment type="similarity">
    <text evidence="6">Belongs to the universal ribosomal protein uS3 family.</text>
</comment>
<proteinExistence type="evidence at protein level"/>
<feature type="chain" id="PRO_0000130328" description="Small ribosomal subunit protein uS3">
    <location>
        <begin position="1"/>
        <end position="246"/>
    </location>
</feature>
<feature type="domain" description="KH type-2" evidence="1">
    <location>
        <begin position="23"/>
        <end position="94"/>
    </location>
</feature>
<feature type="region of interest" description="Disordered" evidence="2">
    <location>
        <begin position="201"/>
        <end position="246"/>
    </location>
</feature>
<feature type="compositionally biased region" description="Basic and acidic residues" evidence="2">
    <location>
        <begin position="214"/>
        <end position="228"/>
    </location>
</feature>
<feature type="compositionally biased region" description="Basic and acidic residues" evidence="2">
    <location>
        <begin position="236"/>
        <end position="246"/>
    </location>
</feature>
<feature type="modified residue" description="Phosphothreonine" evidence="3">
    <location>
        <position position="223"/>
    </location>
</feature>
<feature type="modified residue" description="Phosphothreonine" evidence="3">
    <location>
        <position position="226"/>
    </location>
</feature>
<feature type="modified residue" description="Phosphoserine" evidence="3">
    <location>
        <position position="241"/>
    </location>
</feature>
<feature type="sequence conflict" description="In Ref. 2; CAA51425." evidence="6" ref="2">
    <original>SR</original>
    <variation>FG</variation>
    <location>
        <begin position="46"/>
        <end position="47"/>
    </location>
</feature>
<feature type="sequence conflict" description="In Ref. 2; CAA51425." evidence="6" ref="2">
    <original>G</original>
    <variation>A</variation>
    <location>
        <position position="62"/>
    </location>
</feature>
<feature type="sequence conflict" description="In Ref. 2; CAA51425." evidence="6" ref="2">
    <original>G</original>
    <variation>E</variation>
    <location>
        <position position="114"/>
    </location>
</feature>
<protein>
    <recommendedName>
        <fullName evidence="6">Small ribosomal subunit protein uS3</fullName>
    </recommendedName>
    <alternativeName>
        <fullName>40S ribosomal protein S3</fullName>
    </alternativeName>
</protein>
<accession>Q06559</accession>
<accession>Q9VCM9</accession>
<evidence type="ECO:0000255" key="1">
    <source>
        <dbReference type="PROSITE-ProRule" id="PRU00118"/>
    </source>
</evidence>
<evidence type="ECO:0000256" key="2">
    <source>
        <dbReference type="SAM" id="MobiDB-lite"/>
    </source>
</evidence>
<evidence type="ECO:0000269" key="3">
    <source>
    </source>
</evidence>
<evidence type="ECO:0000269" key="4">
    <source>
    </source>
</evidence>
<evidence type="ECO:0000269" key="5">
    <source>
    </source>
</evidence>
<evidence type="ECO:0000305" key="6"/>
<reference key="1">
    <citation type="journal article" date="1993" name="Nucleic Acids Res.">
        <title>Cloning of the Drosophila ribosomal protein S3: another multifunctional ribosomal protein with AP endonuclease DNA repair activity.</title>
        <authorList>
            <person name="Wilson D.M. III"/>
            <person name="Deutsch W.A."/>
            <person name="Kelley M.R."/>
        </authorList>
    </citation>
    <scope>NUCLEOTIDE SEQUENCE [MRNA]</scope>
</reference>
<reference key="2">
    <citation type="journal article" date="1994" name="Genetics">
        <title>A Drosophila third chromosome Minute locus encodes a ribosomal protein.</title>
        <authorList>
            <person name="Andersson S."/>
            <person name="Saeboe-Larssen S."/>
            <person name="Lambertsson A."/>
            <person name="Meriam J."/>
            <person name="Jacobs-Lorena M."/>
        </authorList>
    </citation>
    <scope>NUCLEOTIDE SEQUENCE [GENOMIC DNA]</scope>
    <source>
        <strain>Shahrinau / Wild-type</strain>
    </source>
</reference>
<reference key="3">
    <citation type="journal article" date="2000" name="Science">
        <title>The genome sequence of Drosophila melanogaster.</title>
        <authorList>
            <person name="Adams M.D."/>
            <person name="Celniker S.E."/>
            <person name="Holt R.A."/>
            <person name="Evans C.A."/>
            <person name="Gocayne J.D."/>
            <person name="Amanatides P.G."/>
            <person name="Scherer S.E."/>
            <person name="Li P.W."/>
            <person name="Hoskins R.A."/>
            <person name="Galle R.F."/>
            <person name="George R.A."/>
            <person name="Lewis S.E."/>
            <person name="Richards S."/>
            <person name="Ashburner M."/>
            <person name="Henderson S.N."/>
            <person name="Sutton G.G."/>
            <person name="Wortman J.R."/>
            <person name="Yandell M.D."/>
            <person name="Zhang Q."/>
            <person name="Chen L.X."/>
            <person name="Brandon R.C."/>
            <person name="Rogers Y.-H.C."/>
            <person name="Blazej R.G."/>
            <person name="Champe M."/>
            <person name="Pfeiffer B.D."/>
            <person name="Wan K.H."/>
            <person name="Doyle C."/>
            <person name="Baxter E.G."/>
            <person name="Helt G."/>
            <person name="Nelson C.R."/>
            <person name="Miklos G.L.G."/>
            <person name="Abril J.F."/>
            <person name="Agbayani A."/>
            <person name="An H.-J."/>
            <person name="Andrews-Pfannkoch C."/>
            <person name="Baldwin D."/>
            <person name="Ballew R.M."/>
            <person name="Basu A."/>
            <person name="Baxendale J."/>
            <person name="Bayraktaroglu L."/>
            <person name="Beasley E.M."/>
            <person name="Beeson K.Y."/>
            <person name="Benos P.V."/>
            <person name="Berman B.P."/>
            <person name="Bhandari D."/>
            <person name="Bolshakov S."/>
            <person name="Borkova D."/>
            <person name="Botchan M.R."/>
            <person name="Bouck J."/>
            <person name="Brokstein P."/>
            <person name="Brottier P."/>
            <person name="Burtis K.C."/>
            <person name="Busam D.A."/>
            <person name="Butler H."/>
            <person name="Cadieu E."/>
            <person name="Center A."/>
            <person name="Chandra I."/>
            <person name="Cherry J.M."/>
            <person name="Cawley S."/>
            <person name="Dahlke C."/>
            <person name="Davenport L.B."/>
            <person name="Davies P."/>
            <person name="de Pablos B."/>
            <person name="Delcher A."/>
            <person name="Deng Z."/>
            <person name="Mays A.D."/>
            <person name="Dew I."/>
            <person name="Dietz S.M."/>
            <person name="Dodson K."/>
            <person name="Doup L.E."/>
            <person name="Downes M."/>
            <person name="Dugan-Rocha S."/>
            <person name="Dunkov B.C."/>
            <person name="Dunn P."/>
            <person name="Durbin K.J."/>
            <person name="Evangelista C.C."/>
            <person name="Ferraz C."/>
            <person name="Ferriera S."/>
            <person name="Fleischmann W."/>
            <person name="Fosler C."/>
            <person name="Gabrielian A.E."/>
            <person name="Garg N.S."/>
            <person name="Gelbart W.M."/>
            <person name="Glasser K."/>
            <person name="Glodek A."/>
            <person name="Gong F."/>
            <person name="Gorrell J.H."/>
            <person name="Gu Z."/>
            <person name="Guan P."/>
            <person name="Harris M."/>
            <person name="Harris N.L."/>
            <person name="Harvey D.A."/>
            <person name="Heiman T.J."/>
            <person name="Hernandez J.R."/>
            <person name="Houck J."/>
            <person name="Hostin D."/>
            <person name="Houston K.A."/>
            <person name="Howland T.J."/>
            <person name="Wei M.-H."/>
            <person name="Ibegwam C."/>
            <person name="Jalali M."/>
            <person name="Kalush F."/>
            <person name="Karpen G.H."/>
            <person name="Ke Z."/>
            <person name="Kennison J.A."/>
            <person name="Ketchum K.A."/>
            <person name="Kimmel B.E."/>
            <person name="Kodira C.D."/>
            <person name="Kraft C.L."/>
            <person name="Kravitz S."/>
            <person name="Kulp D."/>
            <person name="Lai Z."/>
            <person name="Lasko P."/>
            <person name="Lei Y."/>
            <person name="Levitsky A.A."/>
            <person name="Li J.H."/>
            <person name="Li Z."/>
            <person name="Liang Y."/>
            <person name="Lin X."/>
            <person name="Liu X."/>
            <person name="Mattei B."/>
            <person name="McIntosh T.C."/>
            <person name="McLeod M.P."/>
            <person name="McPherson D."/>
            <person name="Merkulov G."/>
            <person name="Milshina N.V."/>
            <person name="Mobarry C."/>
            <person name="Morris J."/>
            <person name="Moshrefi A."/>
            <person name="Mount S.M."/>
            <person name="Moy M."/>
            <person name="Murphy B."/>
            <person name="Murphy L."/>
            <person name="Muzny D.M."/>
            <person name="Nelson D.L."/>
            <person name="Nelson D.R."/>
            <person name="Nelson K.A."/>
            <person name="Nixon K."/>
            <person name="Nusskern D.R."/>
            <person name="Pacleb J.M."/>
            <person name="Palazzolo M."/>
            <person name="Pittman G.S."/>
            <person name="Pan S."/>
            <person name="Pollard J."/>
            <person name="Puri V."/>
            <person name="Reese M.G."/>
            <person name="Reinert K."/>
            <person name="Remington K."/>
            <person name="Saunders R.D.C."/>
            <person name="Scheeler F."/>
            <person name="Shen H."/>
            <person name="Shue B.C."/>
            <person name="Siden-Kiamos I."/>
            <person name="Simpson M."/>
            <person name="Skupski M.P."/>
            <person name="Smith T.J."/>
            <person name="Spier E."/>
            <person name="Spradling A.C."/>
            <person name="Stapleton M."/>
            <person name="Strong R."/>
            <person name="Sun E."/>
            <person name="Svirskas R."/>
            <person name="Tector C."/>
            <person name="Turner R."/>
            <person name="Venter E."/>
            <person name="Wang A.H."/>
            <person name="Wang X."/>
            <person name="Wang Z.-Y."/>
            <person name="Wassarman D.A."/>
            <person name="Weinstock G.M."/>
            <person name="Weissenbach J."/>
            <person name="Williams S.M."/>
            <person name="Woodage T."/>
            <person name="Worley K.C."/>
            <person name="Wu D."/>
            <person name="Yang S."/>
            <person name="Yao Q.A."/>
            <person name="Ye J."/>
            <person name="Yeh R.-F."/>
            <person name="Zaveri J.S."/>
            <person name="Zhan M."/>
            <person name="Zhang G."/>
            <person name="Zhao Q."/>
            <person name="Zheng L."/>
            <person name="Zheng X.H."/>
            <person name="Zhong F.N."/>
            <person name="Zhong W."/>
            <person name="Zhou X."/>
            <person name="Zhu S.C."/>
            <person name="Zhu X."/>
            <person name="Smith H.O."/>
            <person name="Gibbs R.A."/>
            <person name="Myers E.W."/>
            <person name="Rubin G.M."/>
            <person name="Venter J.C."/>
        </authorList>
    </citation>
    <scope>NUCLEOTIDE SEQUENCE [LARGE SCALE GENOMIC DNA]</scope>
    <source>
        <strain>Berkeley</strain>
    </source>
</reference>
<reference key="4">
    <citation type="journal article" date="2002" name="Genome Biol.">
        <title>Annotation of the Drosophila melanogaster euchromatic genome: a systematic review.</title>
        <authorList>
            <person name="Misra S."/>
            <person name="Crosby M.A."/>
            <person name="Mungall C.J."/>
            <person name="Matthews B.B."/>
            <person name="Campbell K.S."/>
            <person name="Hradecky P."/>
            <person name="Huang Y."/>
            <person name="Kaminker J.S."/>
            <person name="Millburn G.H."/>
            <person name="Prochnik S.E."/>
            <person name="Smith C.D."/>
            <person name="Tupy J.L."/>
            <person name="Whitfield E.J."/>
            <person name="Bayraktaroglu L."/>
            <person name="Berman B.P."/>
            <person name="Bettencourt B.R."/>
            <person name="Celniker S.E."/>
            <person name="de Grey A.D.N.J."/>
            <person name="Drysdale R.A."/>
            <person name="Harris N.L."/>
            <person name="Richter J."/>
            <person name="Russo S."/>
            <person name="Schroeder A.J."/>
            <person name="Shu S.Q."/>
            <person name="Stapleton M."/>
            <person name="Yamada C."/>
            <person name="Ashburner M."/>
            <person name="Gelbart W.M."/>
            <person name="Rubin G.M."/>
            <person name="Lewis S.E."/>
        </authorList>
    </citation>
    <scope>GENOME REANNOTATION</scope>
    <source>
        <strain>Berkeley</strain>
    </source>
</reference>
<reference key="5">
    <citation type="journal article" date="2002" name="Genome Biol.">
        <title>A Drosophila full-length cDNA resource.</title>
        <authorList>
            <person name="Stapleton M."/>
            <person name="Carlson J.W."/>
            <person name="Brokstein P."/>
            <person name="Yu C."/>
            <person name="Champe M."/>
            <person name="George R.A."/>
            <person name="Guarin H."/>
            <person name="Kronmiller B."/>
            <person name="Pacleb J.M."/>
            <person name="Park S."/>
            <person name="Wan K.H."/>
            <person name="Rubin G.M."/>
            <person name="Celniker S.E."/>
        </authorList>
    </citation>
    <scope>NUCLEOTIDE SEQUENCE [LARGE SCALE MRNA]</scope>
    <source>
        <strain>Berkeley</strain>
        <tissue>Embryo</tissue>
    </source>
</reference>
<reference key="6">
    <citation type="journal article" date="1996" name="EMBO J.">
        <title>A Drosophila ribosomal protein contains 8-oxoguanine and abasic site DNA repair activities.</title>
        <authorList>
            <person name="Yacoub A."/>
            <person name="Augeri L."/>
            <person name="Kelley M.R."/>
            <person name="Doetsch P.W."/>
            <person name="Deutsch W.A."/>
        </authorList>
    </citation>
    <scope>DNA REPAIR ACTIVITY</scope>
    <scope>SUBCELLULAR LOCATION</scope>
</reference>
<reference key="7">
    <citation type="journal article" date="2008" name="J. Proteome Res.">
        <title>Phosphoproteome analysis of Drosophila melanogaster embryos.</title>
        <authorList>
            <person name="Zhai B."/>
            <person name="Villen J."/>
            <person name="Beausoleil S.A."/>
            <person name="Mintseris J."/>
            <person name="Gygi S.P."/>
        </authorList>
    </citation>
    <scope>PHOSPHORYLATION [LARGE SCALE ANALYSIS] AT THR-223; THR-226 AND SER-241</scope>
    <scope>IDENTIFICATION BY MASS SPECTROMETRY</scope>
    <source>
        <tissue>Embryo</tissue>
    </source>
</reference>
<reference key="8">
    <citation type="journal article" date="2015" name="J. Biol. Chem.">
        <title>Drosophila Low Temperature Viability Protein 1 (LTV1) Is Required for Ribosome Biogenesis and Cell Growth Downstream of Drosophila Myc (dMyc).</title>
        <authorList>
            <person name="Kim W."/>
            <person name="Kim H.D."/>
            <person name="Jung Y."/>
            <person name="Kim J."/>
            <person name="Chung J."/>
        </authorList>
    </citation>
    <scope>INTERACTION WITH LTV1</scope>
    <scope>SUBCELLULAR LOCATION</scope>
</reference>
<reference key="9">
    <citation type="journal article" date="2013" name="Nature">
        <title>Structures of the human and Drosophila 80S ribosome.</title>
        <authorList>
            <person name="Anger A.M."/>
            <person name="Armache J.P."/>
            <person name="Berninghausen O."/>
            <person name="Habeck M."/>
            <person name="Subklewe M."/>
            <person name="Wilson D.N."/>
            <person name="Beckmann R."/>
        </authorList>
    </citation>
    <scope>STRUCTURE BY ELECTRON MICROSCOPY (6.0 ANGSTROMS) OF THE 80S RIBOSOME</scope>
</reference>